<evidence type="ECO:0000250" key="1"/>
<evidence type="ECO:0000256" key="2">
    <source>
        <dbReference type="SAM" id="MobiDB-lite"/>
    </source>
</evidence>
<evidence type="ECO:0000305" key="3"/>
<name>PRP45_CANAL</name>
<dbReference type="EMBL" id="CP017628">
    <property type="protein sequence ID" value="AOW30177.1"/>
    <property type="molecule type" value="Genomic_DNA"/>
</dbReference>
<dbReference type="RefSeq" id="XP_719078.1">
    <property type="nucleotide sequence ID" value="XM_713985.1"/>
</dbReference>
<dbReference type="SMR" id="Q5AC37"/>
<dbReference type="STRING" id="237561.Q5AC37"/>
<dbReference type="EnsemblFungi" id="C6_02440C_A-T">
    <property type="protein sequence ID" value="C6_02440C_A-T-p1"/>
    <property type="gene ID" value="C6_02440C_A"/>
</dbReference>
<dbReference type="GeneID" id="3639166"/>
<dbReference type="KEGG" id="cal:CAALFM_C602440CA"/>
<dbReference type="CGD" id="CAL0000177849">
    <property type="gene designation" value="PRP45"/>
</dbReference>
<dbReference type="VEuPathDB" id="FungiDB:C6_02440C_A"/>
<dbReference type="eggNOG" id="KOG2441">
    <property type="taxonomic scope" value="Eukaryota"/>
</dbReference>
<dbReference type="HOGENOM" id="CLU_085411_0_0_1"/>
<dbReference type="InParanoid" id="Q5AC37"/>
<dbReference type="OrthoDB" id="666364at2759"/>
<dbReference type="PRO" id="PR:Q5AC37"/>
<dbReference type="Proteomes" id="UP000000559">
    <property type="component" value="Chromosome 6"/>
</dbReference>
<dbReference type="GO" id="GO:0005681">
    <property type="term" value="C:spliceosomal complex"/>
    <property type="evidence" value="ECO:0007669"/>
    <property type="project" value="UniProtKB-KW"/>
</dbReference>
<dbReference type="GO" id="GO:0044180">
    <property type="term" value="P:filamentous growth of a unicellular organism"/>
    <property type="evidence" value="ECO:0000315"/>
    <property type="project" value="CGD"/>
</dbReference>
<dbReference type="GO" id="GO:0000398">
    <property type="term" value="P:mRNA splicing, via spliceosome"/>
    <property type="evidence" value="ECO:0007669"/>
    <property type="project" value="InterPro"/>
</dbReference>
<dbReference type="InterPro" id="IPR017862">
    <property type="entry name" value="SKI-int_prot_SKIP"/>
</dbReference>
<dbReference type="InterPro" id="IPR004015">
    <property type="entry name" value="SKI-int_prot_SKIP_SNW-dom"/>
</dbReference>
<dbReference type="PANTHER" id="PTHR12096">
    <property type="entry name" value="NUCLEAR PROTEIN SKIP-RELATED"/>
    <property type="match status" value="1"/>
</dbReference>
<dbReference type="Pfam" id="PF02731">
    <property type="entry name" value="SKIP_SNW"/>
    <property type="match status" value="1"/>
</dbReference>
<reference key="1">
    <citation type="journal article" date="2004" name="Proc. Natl. Acad. Sci. U.S.A.">
        <title>The diploid genome sequence of Candida albicans.</title>
        <authorList>
            <person name="Jones T."/>
            <person name="Federspiel N.A."/>
            <person name="Chibana H."/>
            <person name="Dungan J."/>
            <person name="Kalman S."/>
            <person name="Magee B.B."/>
            <person name="Newport G."/>
            <person name="Thorstenson Y.R."/>
            <person name="Agabian N."/>
            <person name="Magee P.T."/>
            <person name="Davis R.W."/>
            <person name="Scherer S."/>
        </authorList>
    </citation>
    <scope>NUCLEOTIDE SEQUENCE [LARGE SCALE GENOMIC DNA]</scope>
    <source>
        <strain>SC5314 / ATCC MYA-2876</strain>
    </source>
</reference>
<reference key="2">
    <citation type="journal article" date="2007" name="Genome Biol.">
        <title>Assembly of the Candida albicans genome into sixteen supercontigs aligned on the eight chromosomes.</title>
        <authorList>
            <person name="van het Hoog M."/>
            <person name="Rast T.J."/>
            <person name="Martchenko M."/>
            <person name="Grindle S."/>
            <person name="Dignard D."/>
            <person name="Hogues H."/>
            <person name="Cuomo C."/>
            <person name="Berriman M."/>
            <person name="Scherer S."/>
            <person name="Magee B.B."/>
            <person name="Whiteway M."/>
            <person name="Chibana H."/>
            <person name="Nantel A."/>
            <person name="Magee P.T."/>
        </authorList>
    </citation>
    <scope>GENOME REANNOTATION</scope>
    <source>
        <strain>SC5314 / ATCC MYA-2876</strain>
    </source>
</reference>
<reference key="3">
    <citation type="journal article" date="2013" name="Genome Biol.">
        <title>Assembly of a phased diploid Candida albicans genome facilitates allele-specific measurements and provides a simple model for repeat and indel structure.</title>
        <authorList>
            <person name="Muzzey D."/>
            <person name="Schwartz K."/>
            <person name="Weissman J.S."/>
            <person name="Sherlock G."/>
        </authorList>
    </citation>
    <scope>NUCLEOTIDE SEQUENCE [LARGE SCALE GENOMIC DNA]</scope>
    <scope>GENOME REANNOTATION</scope>
    <source>
        <strain>SC5314 / ATCC MYA-2876</strain>
    </source>
</reference>
<organism>
    <name type="scientific">Candida albicans (strain SC5314 / ATCC MYA-2876)</name>
    <name type="common">Yeast</name>
    <dbReference type="NCBI Taxonomy" id="237561"/>
    <lineage>
        <taxon>Eukaryota</taxon>
        <taxon>Fungi</taxon>
        <taxon>Dikarya</taxon>
        <taxon>Ascomycota</taxon>
        <taxon>Saccharomycotina</taxon>
        <taxon>Pichiomycetes</taxon>
        <taxon>Debaryomycetaceae</taxon>
        <taxon>Candida/Lodderomyces clade</taxon>
        <taxon>Candida</taxon>
    </lineage>
</organism>
<protein>
    <recommendedName>
        <fullName>Pre-mRNA-processing protein 45</fullName>
    </recommendedName>
</protein>
<gene>
    <name type="primary">PRP45</name>
    <name type="ordered locus">CAALFM_C602440CA</name>
    <name type="ORF">CaO19.12959</name>
    <name type="ORF">CaO19.5513</name>
</gene>
<sequence length="286" mass="33200">MASCNLLVIQTTSIIMFSSLLSRPVNSSYDPSYHFSPVTREIKNDPTSNGVVSTTKNATPLAPSKYDTTIPLKKRYPNLVHNFPKPELDENVILETKKIIDSILNPSDEPTNDINYIKYENPNPNPNPNPNPNQEQQQQSSSSSSKIIQIKQFQEDPMLPPKFKLRKNRHERIIEDVTFVKDLKTKKLTKEDREFWNIPAAVSNWKNSQGFTIGLDKRMIGREHVPIEMNIEKFNDLSTALSDADLQAREDLKQRNEIRQQKQLQEKRLRDEKIKEIANRSKRRRY</sequence>
<keyword id="KW-0507">mRNA processing</keyword>
<keyword id="KW-0508">mRNA splicing</keyword>
<keyword id="KW-0539">Nucleus</keyword>
<keyword id="KW-1185">Reference proteome</keyword>
<keyword id="KW-0747">Spliceosome</keyword>
<comment type="function">
    <text evidence="1">Involved in pre-mRNA splicing.</text>
</comment>
<comment type="subunit">
    <text evidence="1">Associated with the spliceosome.</text>
</comment>
<comment type="subcellular location">
    <subcellularLocation>
        <location evidence="1">Nucleus</location>
    </subcellularLocation>
</comment>
<comment type="similarity">
    <text evidence="3">Belongs to the SNW family.</text>
</comment>
<accession>Q5AC37</accession>
<accession>A0A1D8PPV8</accession>
<proteinExistence type="inferred from homology"/>
<feature type="chain" id="PRO_0000084816" description="Pre-mRNA-processing protein 45">
    <location>
        <begin position="1"/>
        <end position="286"/>
    </location>
</feature>
<feature type="region of interest" description="Disordered" evidence="2">
    <location>
        <begin position="111"/>
        <end position="146"/>
    </location>
</feature>
<feature type="region of interest" description="Disordered" evidence="2">
    <location>
        <begin position="253"/>
        <end position="286"/>
    </location>
</feature>
<feature type="compositionally biased region" description="Low complexity" evidence="2">
    <location>
        <begin position="132"/>
        <end position="145"/>
    </location>
</feature>
<feature type="compositionally biased region" description="Basic and acidic residues" evidence="2">
    <location>
        <begin position="253"/>
        <end position="279"/>
    </location>
</feature>